<proteinExistence type="evidence at protein level"/>
<comment type="function">
    <text evidence="2">Strongly inhibits its own venom PLA2 and all other PLA2s tested including Elapid, Crotalid and Viperid venom PLA2s, as well as honeybee PLA2s.</text>
</comment>
<comment type="subunit">
    <text evidence="2">Heterotrimer of 2 subunits A and 1 subunit B.</text>
</comment>
<comment type="subcellular location">
    <subcellularLocation>
        <location evidence="2">Secreted</location>
    </subcellularLocation>
    <text evidence="2">Secreted in blood plasma.</text>
</comment>
<comment type="tissue specificity">
    <text evidence="5">Expressed by the liver.</text>
</comment>
<comment type="similarity">
    <text evidence="4">Belongs to the CNF-like-inhibitor family.</text>
</comment>
<reference key="1">
    <citation type="journal article" date="1999" name="J. Biochem.">
        <title>Isolation and amino acid sequence of a phospholipase A2 inhibitor from the blood plasma of the sea krait, Laticauda semifasciata.</title>
        <authorList>
            <person name="Ohkura N."/>
            <person name="Kitahara Y."/>
            <person name="Inoue S."/>
            <person name="Ikeda K."/>
            <person name="Hayashi K."/>
        </authorList>
    </citation>
    <scope>PROTEIN SEQUENCE</scope>
    <scope>FUNCTION</scope>
    <scope>SUBCELLULAR LOCATION</scope>
    <scope>SUBUNIT</scope>
    <source>
        <tissue>Plasma</tissue>
    </source>
</reference>
<sequence>LECEICTAPGLECNSWTKTCDANQDTCVTFQTEVIKAPVSFTFISKSCGTSDTCALNYVQTSPHNKLTHKSQRTCCTGEECKTLPPPVLEHKVNQPDGLQCPGCFGLSTKDCTEHLVSCRGPENQCLSITGKEFGFIFRALSYKGCATESLCSLFEKRFWNVLEDVEVDFKCTPALPKSSQ</sequence>
<evidence type="ECO:0000250" key="1">
    <source>
        <dbReference type="UniProtKB" id="Q7LZI1"/>
    </source>
</evidence>
<evidence type="ECO:0000269" key="2">
    <source>
    </source>
</evidence>
<evidence type="ECO:0000303" key="3">
    <source>
    </source>
</evidence>
<evidence type="ECO:0000305" key="4"/>
<evidence type="ECO:0000305" key="5">
    <source>
    </source>
</evidence>
<name>PLIGB_LATSE</name>
<keyword id="KW-0903">Direct protein sequencing</keyword>
<keyword id="KW-1015">Disulfide bond</keyword>
<keyword id="KW-0593">Phospholipase A2 inhibitor</keyword>
<keyword id="KW-0964">Secreted</keyword>
<feature type="chain" id="PRO_0000452704" description="Phospholipase A2 inhibitor gamma subunit B" evidence="2">
    <location>
        <begin position="1"/>
        <end position="181"/>
    </location>
</feature>
<feature type="disulfide bond" evidence="1">
    <location>
        <begin position="3"/>
        <end position="27"/>
    </location>
</feature>
<feature type="disulfide bond" evidence="1">
    <location>
        <begin position="6"/>
        <end position="13"/>
    </location>
</feature>
<feature type="disulfide bond" evidence="1">
    <location>
        <begin position="20"/>
        <end position="48"/>
    </location>
</feature>
<feature type="disulfide bond" evidence="1">
    <location>
        <begin position="54"/>
        <end position="75"/>
    </location>
</feature>
<feature type="disulfide bond" evidence="1">
    <location>
        <begin position="76"/>
        <end position="81"/>
    </location>
</feature>
<feature type="disulfide bond" evidence="1">
    <location>
        <begin position="101"/>
        <end position="126"/>
    </location>
</feature>
<feature type="disulfide bond" evidence="1">
    <location>
        <begin position="119"/>
        <end position="146"/>
    </location>
</feature>
<feature type="disulfide bond" evidence="4">
    <location>
        <begin position="152"/>
        <end position="172"/>
    </location>
</feature>
<dbReference type="SMR" id="P0DUK6"/>
<dbReference type="GO" id="GO:0005576">
    <property type="term" value="C:extracellular region"/>
    <property type="evidence" value="ECO:0007669"/>
    <property type="project" value="UniProtKB-SubCell"/>
</dbReference>
<dbReference type="GO" id="GO:0019834">
    <property type="term" value="F:phospholipase A2 inhibitor activity"/>
    <property type="evidence" value="ECO:0007669"/>
    <property type="project" value="UniProtKB-KW"/>
</dbReference>
<dbReference type="CDD" id="cd23572">
    <property type="entry name" value="TFP_LU_ECD_PINLYP_rpt2"/>
    <property type="match status" value="1"/>
</dbReference>
<dbReference type="Gene3D" id="2.10.60.10">
    <property type="entry name" value="CD59"/>
    <property type="match status" value="2"/>
</dbReference>
<dbReference type="InterPro" id="IPR050918">
    <property type="entry name" value="CNF-like_PLA2_Inhibitor"/>
</dbReference>
<dbReference type="InterPro" id="IPR016054">
    <property type="entry name" value="LY6_UPA_recep-like"/>
</dbReference>
<dbReference type="InterPro" id="IPR004126">
    <property type="entry name" value="PLipase_A2_inh_N"/>
</dbReference>
<dbReference type="InterPro" id="IPR045860">
    <property type="entry name" value="Snake_toxin-like_sf"/>
</dbReference>
<dbReference type="PANTHER" id="PTHR20914">
    <property type="entry name" value="LY6/PLAUR DOMAIN-CONTAINING PROTEIN 8"/>
    <property type="match status" value="1"/>
</dbReference>
<dbReference type="PANTHER" id="PTHR20914:SF30">
    <property type="entry name" value="LY6_PLAUR DOMAIN CONTAINING 9"/>
    <property type="match status" value="1"/>
</dbReference>
<dbReference type="Pfam" id="PF02988">
    <property type="entry name" value="PLA2_inh"/>
    <property type="match status" value="1"/>
</dbReference>
<dbReference type="Pfam" id="PF00021">
    <property type="entry name" value="UPAR_LY6"/>
    <property type="match status" value="1"/>
</dbReference>
<dbReference type="SUPFAM" id="SSF57302">
    <property type="entry name" value="Snake toxin-like"/>
    <property type="match status" value="2"/>
</dbReference>
<organism>
    <name type="scientific">Laticauda semifasciata</name>
    <name type="common">Black-banded sea krait</name>
    <name type="synonym">Pseudolaticauda semifasciata</name>
    <dbReference type="NCBI Taxonomy" id="8631"/>
    <lineage>
        <taxon>Eukaryota</taxon>
        <taxon>Metazoa</taxon>
        <taxon>Chordata</taxon>
        <taxon>Craniata</taxon>
        <taxon>Vertebrata</taxon>
        <taxon>Euteleostomi</taxon>
        <taxon>Lepidosauria</taxon>
        <taxon>Squamata</taxon>
        <taxon>Bifurcata</taxon>
        <taxon>Unidentata</taxon>
        <taxon>Episquamata</taxon>
        <taxon>Toxicofera</taxon>
        <taxon>Serpentes</taxon>
        <taxon>Colubroidea</taxon>
        <taxon>Elapidae</taxon>
        <taxon>Laticaudinae</taxon>
        <taxon>Laticauda</taxon>
    </lineage>
</organism>
<accession>P0DUK6</accession>
<protein>
    <recommendedName>
        <fullName evidence="4">Phospholipase A2 inhibitor gamma subunit B</fullName>
    </recommendedName>
    <alternativeName>
        <fullName evidence="3">LsPLI-gamma B</fullName>
        <shortName>PLI-gamma B</shortName>
    </alternativeName>
    <alternativeName>
        <fullName evidence="3">gamma-PLI B</fullName>
    </alternativeName>
</protein>